<organism>
    <name type="scientific">Vibrio vulnificus (strain YJ016)</name>
    <dbReference type="NCBI Taxonomy" id="196600"/>
    <lineage>
        <taxon>Bacteria</taxon>
        <taxon>Pseudomonadati</taxon>
        <taxon>Pseudomonadota</taxon>
        <taxon>Gammaproteobacteria</taxon>
        <taxon>Vibrionales</taxon>
        <taxon>Vibrionaceae</taxon>
        <taxon>Vibrio</taxon>
    </lineage>
</organism>
<comment type="function">
    <text evidence="1">Catalyzes the isomerization between 2-isopropylmalate and 3-isopropylmalate, via the formation of 2-isopropylmaleate.</text>
</comment>
<comment type="catalytic activity">
    <reaction evidence="1">
        <text>(2R,3S)-3-isopropylmalate = (2S)-2-isopropylmalate</text>
        <dbReference type="Rhea" id="RHEA:32287"/>
        <dbReference type="ChEBI" id="CHEBI:1178"/>
        <dbReference type="ChEBI" id="CHEBI:35121"/>
        <dbReference type="EC" id="4.2.1.33"/>
    </reaction>
</comment>
<comment type="cofactor">
    <cofactor evidence="1">
        <name>[4Fe-4S] cluster</name>
        <dbReference type="ChEBI" id="CHEBI:49883"/>
    </cofactor>
    <text evidence="1">Binds 1 [4Fe-4S] cluster per subunit.</text>
</comment>
<comment type="pathway">
    <text evidence="1">Amino-acid biosynthesis; L-leucine biosynthesis; L-leucine from 3-methyl-2-oxobutanoate: step 2/4.</text>
</comment>
<comment type="subunit">
    <text evidence="1">Heterodimer of LeuC and LeuD.</text>
</comment>
<comment type="similarity">
    <text evidence="1">Belongs to the aconitase/IPM isomerase family. LeuC type 1 subfamily.</text>
</comment>
<protein>
    <recommendedName>
        <fullName evidence="1">3-isopropylmalate dehydratase large subunit</fullName>
        <ecNumber evidence="1">4.2.1.33</ecNumber>
    </recommendedName>
    <alternativeName>
        <fullName evidence="1">Alpha-IPM isomerase</fullName>
        <shortName evidence="1">IPMI</shortName>
    </alternativeName>
    <alternativeName>
        <fullName evidence="1">Isopropylmalate isomerase</fullName>
    </alternativeName>
</protein>
<evidence type="ECO:0000255" key="1">
    <source>
        <dbReference type="HAMAP-Rule" id="MF_01026"/>
    </source>
</evidence>
<proteinExistence type="inferred from homology"/>
<keyword id="KW-0004">4Fe-4S</keyword>
<keyword id="KW-0028">Amino-acid biosynthesis</keyword>
<keyword id="KW-0100">Branched-chain amino acid biosynthesis</keyword>
<keyword id="KW-0408">Iron</keyword>
<keyword id="KW-0411">Iron-sulfur</keyword>
<keyword id="KW-0432">Leucine biosynthesis</keyword>
<keyword id="KW-0456">Lyase</keyword>
<keyword id="KW-0479">Metal-binding</keyword>
<feature type="chain" id="PRO_0000076840" description="3-isopropylmalate dehydratase large subunit">
    <location>
        <begin position="1"/>
        <end position="466"/>
    </location>
</feature>
<feature type="binding site" evidence="1">
    <location>
        <position position="347"/>
    </location>
    <ligand>
        <name>[4Fe-4S] cluster</name>
        <dbReference type="ChEBI" id="CHEBI:49883"/>
    </ligand>
</feature>
<feature type="binding site" evidence="1">
    <location>
        <position position="407"/>
    </location>
    <ligand>
        <name>[4Fe-4S] cluster</name>
        <dbReference type="ChEBI" id="CHEBI:49883"/>
    </ligand>
</feature>
<feature type="binding site" evidence="1">
    <location>
        <position position="410"/>
    </location>
    <ligand>
        <name>[4Fe-4S] cluster</name>
        <dbReference type="ChEBI" id="CHEBI:49883"/>
    </ligand>
</feature>
<name>LEUC_VIBVY</name>
<gene>
    <name evidence="1" type="primary">leuC</name>
    <name type="ordered locus">VV0485</name>
</gene>
<accession>Q7MP79</accession>
<sequence length="466" mass="50153">MGKTLYEKVYEAHVAVAAEGETPILYIDRHLVHEVTSPQAFDGLREKGRQVRQVSKTFATMDHNVSTTTKDINASGEMARIQMETLIKNCQEFGVTLYDINHKYQGIVHVMGPELGITLPGMTIVCGDSHTATHGAFGSLAFGIGTSEVEHVLATQTLKQARAKTMKIEVQGKVADGITAKDIVLAIIGKTTAAGGTGYVVEFCGEAITDLSMEGRMTVCNMAIELGAKAGLIAPDKTTFDYIKGRKFAPTGADWDAAVEYWKTLKTDEDAKFDAVVTLNAADIKPQVTWGTNPGQVIAVDEPIPAPESFSDPVEKASAEKALAYMGLEAGKSLSEYKVDKVFVGSCTNSRIEDMRAAAVVAKGRKVASHVQALIVPGSEQVKAQAEAEGLDVIFKEAGFEWRLPGCSMCLAMNNDRLGPHERCASTSNRNFEGRQGRDGRTHLVSPAMAAAAAIAGHFVDIRDWK</sequence>
<reference key="1">
    <citation type="journal article" date="2003" name="Genome Res.">
        <title>Comparative genome analysis of Vibrio vulnificus, a marine pathogen.</title>
        <authorList>
            <person name="Chen C.-Y."/>
            <person name="Wu K.-M."/>
            <person name="Chang Y.-C."/>
            <person name="Chang C.-H."/>
            <person name="Tsai H.-C."/>
            <person name="Liao T.-L."/>
            <person name="Liu Y.-M."/>
            <person name="Chen H.-J."/>
            <person name="Shen A.B.-T."/>
            <person name="Li J.-C."/>
            <person name="Su T.-L."/>
            <person name="Shao C.-P."/>
            <person name="Lee C.-T."/>
            <person name="Hor L.-I."/>
            <person name="Tsai S.-F."/>
        </authorList>
    </citation>
    <scope>NUCLEOTIDE SEQUENCE [LARGE SCALE GENOMIC DNA]</scope>
    <source>
        <strain>YJ016</strain>
    </source>
</reference>
<dbReference type="EC" id="4.2.1.33" evidence="1"/>
<dbReference type="EMBL" id="BA000037">
    <property type="protein sequence ID" value="BAC93249.1"/>
    <property type="molecule type" value="Genomic_DNA"/>
</dbReference>
<dbReference type="RefSeq" id="WP_011149403.1">
    <property type="nucleotide sequence ID" value="NC_005139.1"/>
</dbReference>
<dbReference type="SMR" id="Q7MP79"/>
<dbReference type="STRING" id="672.VV93_v1c04530"/>
<dbReference type="KEGG" id="vvy:VV0485"/>
<dbReference type="PATRIC" id="fig|196600.6.peg.511"/>
<dbReference type="eggNOG" id="COG0065">
    <property type="taxonomic scope" value="Bacteria"/>
</dbReference>
<dbReference type="HOGENOM" id="CLU_006714_3_4_6"/>
<dbReference type="UniPathway" id="UPA00048">
    <property type="reaction ID" value="UER00071"/>
</dbReference>
<dbReference type="Proteomes" id="UP000002675">
    <property type="component" value="Chromosome I"/>
</dbReference>
<dbReference type="GO" id="GO:0003861">
    <property type="term" value="F:3-isopropylmalate dehydratase activity"/>
    <property type="evidence" value="ECO:0007669"/>
    <property type="project" value="UniProtKB-UniRule"/>
</dbReference>
<dbReference type="GO" id="GO:0051539">
    <property type="term" value="F:4 iron, 4 sulfur cluster binding"/>
    <property type="evidence" value="ECO:0007669"/>
    <property type="project" value="UniProtKB-KW"/>
</dbReference>
<dbReference type="GO" id="GO:0046872">
    <property type="term" value="F:metal ion binding"/>
    <property type="evidence" value="ECO:0007669"/>
    <property type="project" value="UniProtKB-KW"/>
</dbReference>
<dbReference type="GO" id="GO:0009098">
    <property type="term" value="P:L-leucine biosynthetic process"/>
    <property type="evidence" value="ECO:0007669"/>
    <property type="project" value="UniProtKB-UniRule"/>
</dbReference>
<dbReference type="CDD" id="cd01583">
    <property type="entry name" value="IPMI"/>
    <property type="match status" value="1"/>
</dbReference>
<dbReference type="FunFam" id="3.30.499.10:FF:000006">
    <property type="entry name" value="3-isopropylmalate dehydratase large subunit"/>
    <property type="match status" value="1"/>
</dbReference>
<dbReference type="FunFam" id="3.30.499.10:FF:000007">
    <property type="entry name" value="3-isopropylmalate dehydratase large subunit"/>
    <property type="match status" value="1"/>
</dbReference>
<dbReference type="Gene3D" id="3.30.499.10">
    <property type="entry name" value="Aconitase, domain 3"/>
    <property type="match status" value="2"/>
</dbReference>
<dbReference type="HAMAP" id="MF_01026">
    <property type="entry name" value="LeuC_type1"/>
    <property type="match status" value="1"/>
</dbReference>
<dbReference type="InterPro" id="IPR004430">
    <property type="entry name" value="3-IsopropMal_deHydase_lsu"/>
</dbReference>
<dbReference type="InterPro" id="IPR015931">
    <property type="entry name" value="Acnase/IPM_dHydase_lsu_aba_1/3"/>
</dbReference>
<dbReference type="InterPro" id="IPR001030">
    <property type="entry name" value="Acoase/IPM_deHydtase_lsu_aba"/>
</dbReference>
<dbReference type="InterPro" id="IPR018136">
    <property type="entry name" value="Aconitase_4Fe-4S_BS"/>
</dbReference>
<dbReference type="InterPro" id="IPR036008">
    <property type="entry name" value="Aconitase_4Fe-4S_dom"/>
</dbReference>
<dbReference type="InterPro" id="IPR050067">
    <property type="entry name" value="IPM_dehydratase_rel_enz"/>
</dbReference>
<dbReference type="InterPro" id="IPR033941">
    <property type="entry name" value="IPMI_cat"/>
</dbReference>
<dbReference type="NCBIfam" id="TIGR00170">
    <property type="entry name" value="leuC"/>
    <property type="match status" value="1"/>
</dbReference>
<dbReference type="NCBIfam" id="NF004016">
    <property type="entry name" value="PRK05478.1"/>
    <property type="match status" value="1"/>
</dbReference>
<dbReference type="NCBIfam" id="NF009116">
    <property type="entry name" value="PRK12466.1"/>
    <property type="match status" value="1"/>
</dbReference>
<dbReference type="PANTHER" id="PTHR43822:SF9">
    <property type="entry name" value="3-ISOPROPYLMALATE DEHYDRATASE"/>
    <property type="match status" value="1"/>
</dbReference>
<dbReference type="PANTHER" id="PTHR43822">
    <property type="entry name" value="HOMOACONITASE, MITOCHONDRIAL-RELATED"/>
    <property type="match status" value="1"/>
</dbReference>
<dbReference type="Pfam" id="PF00330">
    <property type="entry name" value="Aconitase"/>
    <property type="match status" value="1"/>
</dbReference>
<dbReference type="PRINTS" id="PR00415">
    <property type="entry name" value="ACONITASE"/>
</dbReference>
<dbReference type="SUPFAM" id="SSF53732">
    <property type="entry name" value="Aconitase iron-sulfur domain"/>
    <property type="match status" value="1"/>
</dbReference>
<dbReference type="PROSITE" id="PS00450">
    <property type="entry name" value="ACONITASE_1"/>
    <property type="match status" value="1"/>
</dbReference>
<dbReference type="PROSITE" id="PS01244">
    <property type="entry name" value="ACONITASE_2"/>
    <property type="match status" value="1"/>
</dbReference>